<accession>Q9RY64</accession>
<dbReference type="EMBL" id="AE000513">
    <property type="protein sequence ID" value="AAF09679.1"/>
    <property type="status" value="ALT_INIT"/>
    <property type="molecule type" value="Genomic_DNA"/>
</dbReference>
<dbReference type="PIR" id="F75560">
    <property type="entry name" value="F75560"/>
</dbReference>
<dbReference type="RefSeq" id="NP_293812.1">
    <property type="nucleotide sequence ID" value="NC_001263.1"/>
</dbReference>
<dbReference type="RefSeq" id="WP_027480310.1">
    <property type="nucleotide sequence ID" value="NC_001263.1"/>
</dbReference>
<dbReference type="PDB" id="1NKW">
    <property type="method" value="X-ray"/>
    <property type="resolution" value="3.10 A"/>
    <property type="chains" value="P=1-100"/>
</dbReference>
<dbReference type="PDB" id="1NWX">
    <property type="method" value="X-ray"/>
    <property type="resolution" value="3.50 A"/>
    <property type="chains" value="P=1-100"/>
</dbReference>
<dbReference type="PDB" id="1NWY">
    <property type="method" value="X-ray"/>
    <property type="resolution" value="3.30 A"/>
    <property type="chains" value="P=1-100"/>
</dbReference>
<dbReference type="PDB" id="1SM1">
    <property type="method" value="X-ray"/>
    <property type="resolution" value="3.42 A"/>
    <property type="chains" value="P=1-100"/>
</dbReference>
<dbReference type="PDB" id="1XBP">
    <property type="method" value="X-ray"/>
    <property type="resolution" value="3.50 A"/>
    <property type="chains" value="P=1-100"/>
</dbReference>
<dbReference type="PDB" id="2ZJP">
    <property type="method" value="X-ray"/>
    <property type="resolution" value="3.70 A"/>
    <property type="chains" value="O=1-100"/>
</dbReference>
<dbReference type="PDB" id="2ZJQ">
    <property type="method" value="X-ray"/>
    <property type="resolution" value="3.30 A"/>
    <property type="chains" value="O=1-100"/>
</dbReference>
<dbReference type="PDB" id="2ZJR">
    <property type="method" value="X-ray"/>
    <property type="resolution" value="2.91 A"/>
    <property type="chains" value="O=1-100"/>
</dbReference>
<dbReference type="PDB" id="3CF5">
    <property type="method" value="X-ray"/>
    <property type="resolution" value="3.30 A"/>
    <property type="chains" value="O=1-100"/>
</dbReference>
<dbReference type="PDB" id="3DLL">
    <property type="method" value="X-ray"/>
    <property type="resolution" value="3.50 A"/>
    <property type="chains" value="O=1-100"/>
</dbReference>
<dbReference type="PDB" id="3PIO">
    <property type="method" value="X-ray"/>
    <property type="resolution" value="3.25 A"/>
    <property type="chains" value="O=1-100"/>
</dbReference>
<dbReference type="PDB" id="3PIP">
    <property type="method" value="X-ray"/>
    <property type="resolution" value="3.45 A"/>
    <property type="chains" value="O=1-100"/>
</dbReference>
<dbReference type="PDB" id="4IO9">
    <property type="method" value="X-ray"/>
    <property type="resolution" value="3.20 A"/>
    <property type="chains" value="O=1-100"/>
</dbReference>
<dbReference type="PDB" id="4IOA">
    <property type="method" value="X-ray"/>
    <property type="resolution" value="3.20 A"/>
    <property type="chains" value="O=1-100"/>
</dbReference>
<dbReference type="PDB" id="4IOC">
    <property type="method" value="X-ray"/>
    <property type="resolution" value="3.60 A"/>
    <property type="chains" value="O=1-100"/>
</dbReference>
<dbReference type="PDB" id="4U67">
    <property type="method" value="X-ray"/>
    <property type="resolution" value="3.65 A"/>
    <property type="chains" value="O=1-100"/>
</dbReference>
<dbReference type="PDB" id="4V49">
    <property type="method" value="X-ray"/>
    <property type="resolution" value="8.70 A"/>
    <property type="chains" value="P=1-100"/>
</dbReference>
<dbReference type="PDB" id="4V4A">
    <property type="method" value="X-ray"/>
    <property type="resolution" value="9.50 A"/>
    <property type="chains" value="P=1-100"/>
</dbReference>
<dbReference type="PDB" id="4V4G">
    <property type="method" value="X-ray"/>
    <property type="resolution" value="11.50 A"/>
    <property type="chains" value="S=1-100"/>
</dbReference>
<dbReference type="PDB" id="4V4R">
    <property type="method" value="X-ray"/>
    <property type="resolution" value="5.90 A"/>
    <property type="chains" value="BV=1-100"/>
</dbReference>
<dbReference type="PDB" id="4V4S">
    <property type="method" value="X-ray"/>
    <property type="resolution" value="6.76 A"/>
    <property type="chains" value="BV=1-100"/>
</dbReference>
<dbReference type="PDB" id="4V4T">
    <property type="method" value="X-ray"/>
    <property type="resolution" value="6.46 A"/>
    <property type="chains" value="V=1-100"/>
</dbReference>
<dbReference type="PDB" id="4WFN">
    <property type="method" value="X-ray"/>
    <property type="resolution" value="3.54 A"/>
    <property type="chains" value="O=1-100"/>
</dbReference>
<dbReference type="PDB" id="5DM6">
    <property type="method" value="X-ray"/>
    <property type="resolution" value="2.90 A"/>
    <property type="chains" value="O=5-98"/>
</dbReference>
<dbReference type="PDB" id="5DM7">
    <property type="method" value="X-ray"/>
    <property type="resolution" value="3.00 A"/>
    <property type="chains" value="O=5-98"/>
</dbReference>
<dbReference type="PDB" id="5JVG">
    <property type="method" value="X-ray"/>
    <property type="resolution" value="3.43 A"/>
    <property type="chains" value="O=1-100"/>
</dbReference>
<dbReference type="PDB" id="5JVH">
    <property type="method" value="X-ray"/>
    <property type="resolution" value="3.58 A"/>
    <property type="chains" value="O=1-100"/>
</dbReference>
<dbReference type="PDB" id="7A0R">
    <property type="method" value="X-ray"/>
    <property type="resolution" value="3.30 A"/>
    <property type="chains" value="O=1-98"/>
</dbReference>
<dbReference type="PDB" id="7A0S">
    <property type="method" value="X-ray"/>
    <property type="resolution" value="3.22 A"/>
    <property type="chains" value="O=1-98"/>
</dbReference>
<dbReference type="PDB" id="7A18">
    <property type="method" value="X-ray"/>
    <property type="resolution" value="3.40 A"/>
    <property type="chains" value="O=1-98"/>
</dbReference>
<dbReference type="PDBsum" id="1NKW"/>
<dbReference type="PDBsum" id="1NWX"/>
<dbReference type="PDBsum" id="1NWY"/>
<dbReference type="PDBsum" id="1SM1"/>
<dbReference type="PDBsum" id="1XBP"/>
<dbReference type="PDBsum" id="2ZJP"/>
<dbReference type="PDBsum" id="2ZJQ"/>
<dbReference type="PDBsum" id="2ZJR"/>
<dbReference type="PDBsum" id="3CF5"/>
<dbReference type="PDBsum" id="3DLL"/>
<dbReference type="PDBsum" id="3PIO"/>
<dbReference type="PDBsum" id="3PIP"/>
<dbReference type="PDBsum" id="4IO9"/>
<dbReference type="PDBsum" id="4IOA"/>
<dbReference type="PDBsum" id="4IOC"/>
<dbReference type="PDBsum" id="4U67"/>
<dbReference type="PDBsum" id="4V49"/>
<dbReference type="PDBsum" id="4V4A"/>
<dbReference type="PDBsum" id="4V4G"/>
<dbReference type="PDBsum" id="4V4R"/>
<dbReference type="PDBsum" id="4V4S"/>
<dbReference type="PDBsum" id="4V4T"/>
<dbReference type="PDBsum" id="4WFN"/>
<dbReference type="PDBsum" id="5DM6"/>
<dbReference type="PDBsum" id="5DM7"/>
<dbReference type="PDBsum" id="5JVG"/>
<dbReference type="PDBsum" id="5JVH"/>
<dbReference type="PDBsum" id="7A0R"/>
<dbReference type="PDBsum" id="7A0S"/>
<dbReference type="PDBsum" id="7A18"/>
<dbReference type="SMR" id="Q9RY64"/>
<dbReference type="FunCoup" id="Q9RY64">
    <property type="interactions" value="350"/>
</dbReference>
<dbReference type="IntAct" id="Q9RY64">
    <property type="interactions" value="1"/>
</dbReference>
<dbReference type="STRING" id="243230.DR_0086"/>
<dbReference type="PaxDb" id="243230-DR_0086"/>
<dbReference type="EnsemblBacteria" id="AAF09679">
    <property type="protein sequence ID" value="AAF09679"/>
    <property type="gene ID" value="DR_0086"/>
</dbReference>
<dbReference type="GeneID" id="69516317"/>
<dbReference type="KEGG" id="dra:DR_0086"/>
<dbReference type="PATRIC" id="fig|243230.17.peg.250"/>
<dbReference type="eggNOG" id="COG0261">
    <property type="taxonomic scope" value="Bacteria"/>
</dbReference>
<dbReference type="HOGENOM" id="CLU_1575895_0_0_0"/>
<dbReference type="InParanoid" id="Q9RY64"/>
<dbReference type="OrthoDB" id="9813334at2"/>
<dbReference type="EvolutionaryTrace" id="Q9RY64"/>
<dbReference type="Proteomes" id="UP000002524">
    <property type="component" value="Chromosome 1"/>
</dbReference>
<dbReference type="GO" id="GO:0005737">
    <property type="term" value="C:cytoplasm"/>
    <property type="evidence" value="ECO:0007669"/>
    <property type="project" value="UniProtKB-ARBA"/>
</dbReference>
<dbReference type="GO" id="GO:1990904">
    <property type="term" value="C:ribonucleoprotein complex"/>
    <property type="evidence" value="ECO:0007669"/>
    <property type="project" value="UniProtKB-KW"/>
</dbReference>
<dbReference type="GO" id="GO:0005840">
    <property type="term" value="C:ribosome"/>
    <property type="evidence" value="ECO:0007669"/>
    <property type="project" value="UniProtKB-KW"/>
</dbReference>
<dbReference type="GO" id="GO:0019843">
    <property type="term" value="F:rRNA binding"/>
    <property type="evidence" value="ECO:0007669"/>
    <property type="project" value="UniProtKB-UniRule"/>
</dbReference>
<dbReference type="GO" id="GO:0003735">
    <property type="term" value="F:structural constituent of ribosome"/>
    <property type="evidence" value="ECO:0000318"/>
    <property type="project" value="GO_Central"/>
</dbReference>
<dbReference type="GO" id="GO:0006412">
    <property type="term" value="P:translation"/>
    <property type="evidence" value="ECO:0007669"/>
    <property type="project" value="UniProtKB-UniRule"/>
</dbReference>
<dbReference type="HAMAP" id="MF_01363">
    <property type="entry name" value="Ribosomal_bL21"/>
    <property type="match status" value="1"/>
</dbReference>
<dbReference type="InterPro" id="IPR028909">
    <property type="entry name" value="bL21-like"/>
</dbReference>
<dbReference type="InterPro" id="IPR036164">
    <property type="entry name" value="bL21-like_sf"/>
</dbReference>
<dbReference type="InterPro" id="IPR001787">
    <property type="entry name" value="Ribosomal_bL21"/>
</dbReference>
<dbReference type="NCBIfam" id="TIGR00061">
    <property type="entry name" value="L21"/>
    <property type="match status" value="1"/>
</dbReference>
<dbReference type="PANTHER" id="PTHR21349">
    <property type="entry name" value="50S RIBOSOMAL PROTEIN L21"/>
    <property type="match status" value="1"/>
</dbReference>
<dbReference type="PANTHER" id="PTHR21349:SF0">
    <property type="entry name" value="LARGE RIBOSOMAL SUBUNIT PROTEIN BL21M"/>
    <property type="match status" value="1"/>
</dbReference>
<dbReference type="Pfam" id="PF00829">
    <property type="entry name" value="Ribosomal_L21p"/>
    <property type="match status" value="1"/>
</dbReference>
<dbReference type="SUPFAM" id="SSF141091">
    <property type="entry name" value="L21p-like"/>
    <property type="match status" value="1"/>
</dbReference>
<keyword id="KW-0002">3D-structure</keyword>
<keyword id="KW-0903">Direct protein sequencing</keyword>
<keyword id="KW-1185">Reference proteome</keyword>
<keyword id="KW-0687">Ribonucleoprotein</keyword>
<keyword id="KW-0689">Ribosomal protein</keyword>
<keyword id="KW-0694">RNA-binding</keyword>
<keyword id="KW-0699">rRNA-binding</keyword>
<name>RL21_DEIRA</name>
<organism>
    <name type="scientific">Deinococcus radiodurans (strain ATCC 13939 / DSM 20539 / JCM 16871 / CCUG 27074 / LMG 4051 / NBRC 15346 / NCIMB 9279 / VKM B-1422 / R1)</name>
    <dbReference type="NCBI Taxonomy" id="243230"/>
    <lineage>
        <taxon>Bacteria</taxon>
        <taxon>Thermotogati</taxon>
        <taxon>Deinococcota</taxon>
        <taxon>Deinococci</taxon>
        <taxon>Deinococcales</taxon>
        <taxon>Deinococcaceae</taxon>
        <taxon>Deinococcus</taxon>
    </lineage>
</organism>
<reference key="1">
    <citation type="journal article" date="1999" name="Science">
        <title>Genome sequence of the radioresistant bacterium Deinococcus radiodurans R1.</title>
        <authorList>
            <person name="White O."/>
            <person name="Eisen J.A."/>
            <person name="Heidelberg J.F."/>
            <person name="Hickey E.K."/>
            <person name="Peterson J.D."/>
            <person name="Dodson R.J."/>
            <person name="Haft D.H."/>
            <person name="Gwinn M.L."/>
            <person name="Nelson W.C."/>
            <person name="Richardson D.L."/>
            <person name="Moffat K.S."/>
            <person name="Qin H."/>
            <person name="Jiang L."/>
            <person name="Pamphile W."/>
            <person name="Crosby M."/>
            <person name="Shen M."/>
            <person name="Vamathevan J.J."/>
            <person name="Lam P."/>
            <person name="McDonald L.A."/>
            <person name="Utterback T.R."/>
            <person name="Zalewski C."/>
            <person name="Makarova K.S."/>
            <person name="Aravind L."/>
            <person name="Daly M.J."/>
            <person name="Minton K.W."/>
            <person name="Fleischmann R.D."/>
            <person name="Ketchum K.A."/>
            <person name="Nelson K.E."/>
            <person name="Salzberg S.L."/>
            <person name="Smith H.O."/>
            <person name="Venter J.C."/>
            <person name="Fraser C.M."/>
        </authorList>
    </citation>
    <scope>NUCLEOTIDE SEQUENCE [LARGE SCALE GENOMIC DNA]</scope>
    <source>
        <strain>ATCC 13939 / DSM 20539 / JCM 16871 / CCUG 27074 / LMG 4051 / NBRC 15346 / NCIMB 9279 / VKM B-1422 / R1</strain>
    </source>
</reference>
<reference key="2">
    <citation type="journal article" date="2001" name="Cell">
        <title>High resolution structure of the large ribosomal subunit from a mesophilic eubacterium.</title>
        <authorList>
            <person name="Harms J."/>
            <person name="Schluenzen F."/>
            <person name="Zarivach R."/>
            <person name="Bashan A."/>
            <person name="Gat S."/>
            <person name="Agmon I."/>
            <person name="Bartels H."/>
            <person name="Franceschi F."/>
            <person name="Yonath A."/>
        </authorList>
    </citation>
    <scope>X-RAY CRYSTALLOGRAPHY (3.1 ANGSTROMS) OF THE 50S SUBUNIT</scope>
    <scope>PROTEIN SEQUENCE OF 1-5</scope>
    <source>
        <strain>ATCC 13939 / DSM 20539 / JCM 16871 / CCUG 27074 / LMG 4051 / NBRC 15346 / NCIMB 9279 / VKM B-1422 / R1</strain>
    </source>
</reference>
<reference key="3">
    <citation type="journal article" date="2001" name="Nature">
        <title>Structural basis for the interaction of antibiotics with the peptidyl transferase centre in eubacteria.</title>
        <authorList>
            <person name="Schluenzen F."/>
            <person name="Zarivach R."/>
            <person name="Harms J."/>
            <person name="Bashan A."/>
            <person name="Tocilj A."/>
            <person name="Albrecht R."/>
            <person name="Yonath A."/>
            <person name="Franceschi F."/>
        </authorList>
    </citation>
    <scope>X-RAY CRYSTALLOGRAPHY (3.1 ANGSTROMS) OF THE 50S SUBUNIT IN COMPLEX WITH FIVE ANTIBIOTICS</scope>
    <source>
        <strain>ATCC 13939 / DSM 20539 / JCM 16871 / CCUG 27074 / LMG 4051 / NBRC 15346 / NCIMB 9279 / VKM B-1422 / R1</strain>
    </source>
</reference>
<reference key="4">
    <citation type="journal article" date="2003" name="Mol. Cell">
        <title>Structural basis of the ribosomal machinery for peptide bond formation, translocation, and nascent chain progression.</title>
        <authorList>
            <person name="Bashan A."/>
            <person name="Agmon I."/>
            <person name="Zarivach R."/>
            <person name="Schluenzen F."/>
            <person name="Harms J."/>
            <person name="Berisio R."/>
            <person name="Bartels H."/>
            <person name="Franceschi F."/>
            <person name="Auerbach T."/>
            <person name="Hansen H.A."/>
            <person name="Kossoy E."/>
            <person name="Kessler M."/>
            <person name="Yonath A."/>
        </authorList>
    </citation>
    <scope>X-RAY CRYSTALLOGRAPHY (3.5 ANGSTROMS) OF THE 50S SUBUNIT IN COMPLEX WITH TRNA MIMICS</scope>
    <source>
        <strain>ATCC 13939 / DSM 20539 / JCM 16871 / CCUG 27074 / LMG 4051 / NBRC 15346 / NCIMB 9279 / VKM B-1422 / R1</strain>
    </source>
</reference>
<reference key="5">
    <citation type="journal article" date="2003" name="Structure">
        <title>Structural basis for the antibiotic activity of ketolides and azalides.</title>
        <authorList>
            <person name="Schluenzen F."/>
            <person name="Harms J.M."/>
            <person name="Franceschi F."/>
            <person name="Hansen H.A."/>
            <person name="Bartels H."/>
            <person name="Zarivach R."/>
            <person name="Yonath A."/>
        </authorList>
    </citation>
    <scope>X-RAY CRYSTALLOGRAPHY (3.3 ANGSTROMS) OF THE 50S SUBUNIT IN COMPLEX WITH MODIFIED MACROLIDE ANTIBIOTICS</scope>
    <source>
        <strain>ATCC 13939 / DSM 20539 / JCM 16871 / CCUG 27074 / LMG 4051 / NBRC 15346 / NCIMB 9279 / VKM B-1422 / R1</strain>
    </source>
</reference>
<reference key="6">
    <citation type="journal article" date="2003" name="Nat. Struct. Biol.">
        <title>Structural insight into the role of the ribosomal tunnel in cellular regulation.</title>
        <authorList>
            <person name="Berisio R."/>
            <person name="Schluenzen F."/>
            <person name="Harms J."/>
            <person name="Bashan A."/>
            <person name="Auerbach T."/>
            <person name="Baram D."/>
            <person name="Yonath A."/>
        </authorList>
    </citation>
    <scope>X-RAY CRYSTALLOGRAPHY (3.4 ANGSTROMS) OF THE 50S SUBUNIT IN COMPLEX WITH TROLEANDOMYCIN</scope>
    <source>
        <strain>ATCC 13939 / DSM 20539 / JCM 16871 / CCUG 27074 / LMG 4051 / NBRC 15346 / NCIMB 9279 / VKM B-1422 / R1</strain>
    </source>
</reference>
<reference key="7">
    <citation type="journal article" date="2004" name="BMC Biol.">
        <title>Alterations at the peptidyl transferase centre of the ribosome induced by the synergistic action of the streptogramins dalfopristin and quinupristin.</title>
        <authorList>
            <person name="Harms J.M."/>
            <person name="Schluenzen F."/>
            <person name="Fucini P."/>
            <person name="Bartels H."/>
            <person name="Yonath A."/>
        </authorList>
    </citation>
    <scope>X-RAY CRYSTALLOGRAPHY (3.4 ANGSTROMS) OF THE 50S SUBUNIT IN COMPLEX WITH THE STREPTOGRAMINS QUINUPRISTIN AND DALFOPRISTIN</scope>
    <source>
        <strain>ATCC 13939 / DSM 20539 / JCM 16871 / CCUG 27074 / LMG 4051 / NBRC 15346 / NCIMB 9279 / VKM B-1422 / R1</strain>
    </source>
</reference>
<reference key="8">
    <citation type="journal article" date="2004" name="Mol. Microbiol.">
        <title>Inhibition of peptide bond formation by pleuromutilins: the structure of the 50S ribosomal subunit from Deinococcus radiodurans in complex with tiamulin.</title>
        <authorList>
            <person name="Schluenzen F."/>
            <person name="Pyetan E."/>
            <person name="Fucini P."/>
            <person name="Yonath A."/>
            <person name="Harms J.M."/>
        </authorList>
    </citation>
    <scope>X-RAY CRYSTALLOGRAPHY (3.5 ANGSTROMS) OF THE 50S SUBUNIT IN COMPLEX WITH TIAMULIN</scope>
    <source>
        <strain>ATCC 13939 / DSM 20539 / JCM 16871 / CCUG 27074 / LMG 4051 / NBRC 15346 / NCIMB 9279 / VKM B-1422 / R1</strain>
    </source>
</reference>
<sequence>MFAIIQTGGKQYRVSEGDVIRVESLQGEAGDKVELKALFVGGEQTVFGEDAGKYTVQAEVVEHGRGKKIYIRKYKSGVQYRRRTGHRQNFTAIKILGIQG</sequence>
<gene>
    <name evidence="1" type="primary">rplU</name>
    <name type="ordered locus">DR_0086</name>
</gene>
<protein>
    <recommendedName>
        <fullName evidence="1">Large ribosomal subunit protein bL21</fullName>
    </recommendedName>
    <alternativeName>
        <fullName evidence="8">50S ribosomal protein L21</fullName>
    </alternativeName>
</protein>
<proteinExistence type="evidence at protein level"/>
<feature type="chain" id="PRO_0000180999" description="Large ribosomal subunit protein bL21">
    <location>
        <begin position="1"/>
        <end position="100"/>
    </location>
</feature>
<feature type="strand" evidence="12">
    <location>
        <begin position="6"/>
        <end position="8"/>
    </location>
</feature>
<feature type="strand" evidence="13">
    <location>
        <begin position="16"/>
        <end position="18"/>
    </location>
</feature>
<feature type="strand" evidence="10">
    <location>
        <begin position="21"/>
        <end position="23"/>
    </location>
</feature>
<feature type="strand" evidence="11">
    <location>
        <begin position="26"/>
        <end position="28"/>
    </location>
</feature>
<feature type="strand" evidence="10">
    <location>
        <begin position="32"/>
        <end position="36"/>
    </location>
</feature>
<feature type="strand" evidence="9">
    <location>
        <begin position="37"/>
        <end position="39"/>
    </location>
</feature>
<feature type="strand" evidence="10">
    <location>
        <begin position="41"/>
        <end position="44"/>
    </location>
</feature>
<feature type="helix" evidence="10">
    <location>
        <begin position="49"/>
        <end position="53"/>
    </location>
</feature>
<feature type="strand" evidence="10">
    <location>
        <begin position="54"/>
        <end position="65"/>
    </location>
</feature>
<feature type="strand" evidence="10">
    <location>
        <begin position="69"/>
        <end position="75"/>
    </location>
</feature>
<feature type="turn" evidence="10">
    <location>
        <begin position="76"/>
        <end position="79"/>
    </location>
</feature>
<feature type="strand" evidence="10">
    <location>
        <begin position="80"/>
        <end position="86"/>
    </location>
</feature>
<feature type="strand" evidence="10">
    <location>
        <begin position="89"/>
        <end position="95"/>
    </location>
</feature>
<evidence type="ECO:0000255" key="1">
    <source>
        <dbReference type="HAMAP-Rule" id="MF_01363"/>
    </source>
</evidence>
<evidence type="ECO:0000269" key="2">
    <source>
    </source>
</evidence>
<evidence type="ECO:0000269" key="3">
    <source>
    </source>
</evidence>
<evidence type="ECO:0000269" key="4">
    <source>
    </source>
</evidence>
<evidence type="ECO:0000269" key="5">
    <source>
    </source>
</evidence>
<evidence type="ECO:0000269" key="6">
    <source>
    </source>
</evidence>
<evidence type="ECO:0000269" key="7">
    <source>
    </source>
</evidence>
<evidence type="ECO:0000305" key="8"/>
<evidence type="ECO:0007829" key="9">
    <source>
        <dbReference type="PDB" id="4IO9"/>
    </source>
</evidence>
<evidence type="ECO:0007829" key="10">
    <source>
        <dbReference type="PDB" id="5DM6"/>
    </source>
</evidence>
<evidence type="ECO:0007829" key="11">
    <source>
        <dbReference type="PDB" id="5DM7"/>
    </source>
</evidence>
<evidence type="ECO:0007829" key="12">
    <source>
        <dbReference type="PDB" id="5JVG"/>
    </source>
</evidence>
<evidence type="ECO:0007829" key="13">
    <source>
        <dbReference type="PDB" id="7A18"/>
    </source>
</evidence>
<comment type="function">
    <text>Binds directly to 23S rRNA, probably serving to organize its structure.</text>
</comment>
<comment type="subunit">
    <text evidence="1 2 3 4 5 6 7">Part of the 50S ribosomal subunit. Contacts proteins L15 and L20.</text>
</comment>
<comment type="similarity">
    <text evidence="1">Belongs to the bacterial ribosomal protein bL21 family.</text>
</comment>
<comment type="sequence caution" evidence="8">
    <conflict type="erroneous initiation">
        <sequence resource="EMBL-CDS" id="AAF09679"/>
    </conflict>
</comment>